<evidence type="ECO:0000250" key="1"/>
<evidence type="ECO:0000305" key="2"/>
<name>GUAAB_SACS2</name>
<organism>
    <name type="scientific">Saccharolobus solfataricus (strain ATCC 35092 / DSM 1617 / JCM 11322 / P2)</name>
    <name type="common">Sulfolobus solfataricus</name>
    <dbReference type="NCBI Taxonomy" id="273057"/>
    <lineage>
        <taxon>Archaea</taxon>
        <taxon>Thermoproteota</taxon>
        <taxon>Thermoprotei</taxon>
        <taxon>Sulfolobales</taxon>
        <taxon>Sulfolobaceae</taxon>
        <taxon>Saccharolobus</taxon>
    </lineage>
</organism>
<gene>
    <name type="primary">guaAB</name>
    <name type="synonym">guaA</name>
    <name type="ordered locus">SSO3232</name>
</gene>
<keyword id="KW-0067">ATP-binding</keyword>
<keyword id="KW-0332">GMP biosynthesis</keyword>
<keyword id="KW-0436">Ligase</keyword>
<keyword id="KW-0547">Nucleotide-binding</keyword>
<keyword id="KW-0658">Purine biosynthesis</keyword>
<keyword id="KW-1185">Reference proteome</keyword>
<comment type="function">
    <text evidence="1">Catalyzes the synthesis of GMP from XMP.</text>
</comment>
<comment type="catalytic activity">
    <reaction>
        <text>XMP + L-glutamine + ATP + H2O = GMP + L-glutamate + AMP + diphosphate + 2 H(+)</text>
        <dbReference type="Rhea" id="RHEA:11680"/>
        <dbReference type="ChEBI" id="CHEBI:15377"/>
        <dbReference type="ChEBI" id="CHEBI:15378"/>
        <dbReference type="ChEBI" id="CHEBI:29985"/>
        <dbReference type="ChEBI" id="CHEBI:30616"/>
        <dbReference type="ChEBI" id="CHEBI:33019"/>
        <dbReference type="ChEBI" id="CHEBI:57464"/>
        <dbReference type="ChEBI" id="CHEBI:58115"/>
        <dbReference type="ChEBI" id="CHEBI:58359"/>
        <dbReference type="ChEBI" id="CHEBI:456215"/>
        <dbReference type="EC" id="6.3.5.2"/>
    </reaction>
</comment>
<comment type="pathway">
    <text>Purine metabolism; GMP biosynthesis; GMP from XMP (L-Gln route): step 1/1.</text>
</comment>
<comment type="subunit">
    <text evidence="2">Heterodimer composed of a glutamine amidotransferase subunit (A) and a GMP-binding subunit (B).</text>
</comment>
<reference key="1">
    <citation type="journal article" date="2001" name="Proc. Natl. Acad. Sci. U.S.A.">
        <title>The complete genome of the crenarchaeon Sulfolobus solfataricus P2.</title>
        <authorList>
            <person name="She Q."/>
            <person name="Singh R.K."/>
            <person name="Confalonieri F."/>
            <person name="Zivanovic Y."/>
            <person name="Allard G."/>
            <person name="Awayez M.J."/>
            <person name="Chan-Weiher C.C.-Y."/>
            <person name="Clausen I.G."/>
            <person name="Curtis B.A."/>
            <person name="De Moors A."/>
            <person name="Erauso G."/>
            <person name="Fletcher C."/>
            <person name="Gordon P.M.K."/>
            <person name="Heikamp-de Jong I."/>
            <person name="Jeffries A.C."/>
            <person name="Kozera C.J."/>
            <person name="Medina N."/>
            <person name="Peng X."/>
            <person name="Thi-Ngoc H.P."/>
            <person name="Redder P."/>
            <person name="Schenk M.E."/>
            <person name="Theriault C."/>
            <person name="Tolstrup N."/>
            <person name="Charlebois R.L."/>
            <person name="Doolittle W.F."/>
            <person name="Duguet M."/>
            <person name="Gaasterland T."/>
            <person name="Garrett R.A."/>
            <person name="Ragan M.A."/>
            <person name="Sensen C.W."/>
            <person name="Van der Oost J."/>
        </authorList>
    </citation>
    <scope>NUCLEOTIDE SEQUENCE [LARGE SCALE GENOMIC DNA]</scope>
    <source>
        <strain>ATCC 35092 / DSM 1617 / JCM 11322 / P2</strain>
    </source>
</reference>
<proteinExistence type="inferred from homology"/>
<protein>
    <recommendedName>
        <fullName>GMP synthase [glutamine-hydrolyzing] subunit B</fullName>
        <ecNumber>6.3.5.2</ecNumber>
    </recommendedName>
    <alternativeName>
        <fullName>GMP synthetase</fullName>
    </alternativeName>
</protein>
<dbReference type="EC" id="6.3.5.2"/>
<dbReference type="EMBL" id="AE006641">
    <property type="protein sequence ID" value="AAK43326.1"/>
    <property type="molecule type" value="Genomic_DNA"/>
</dbReference>
<dbReference type="PIR" id="G90508">
    <property type="entry name" value="G90508"/>
</dbReference>
<dbReference type="RefSeq" id="WP_009989678.1">
    <property type="nucleotide sequence ID" value="NC_002754.1"/>
</dbReference>
<dbReference type="SMR" id="Q97TZ8"/>
<dbReference type="FunCoup" id="Q97TZ8">
    <property type="interactions" value="361"/>
</dbReference>
<dbReference type="STRING" id="273057.SSO3232"/>
<dbReference type="PaxDb" id="273057-SSO3232"/>
<dbReference type="EnsemblBacteria" id="AAK43326">
    <property type="protein sequence ID" value="AAK43326"/>
    <property type="gene ID" value="SSO3232"/>
</dbReference>
<dbReference type="KEGG" id="sso:SSO3232"/>
<dbReference type="PATRIC" id="fig|273057.12.peg.3334"/>
<dbReference type="eggNOG" id="arCOG00085">
    <property type="taxonomic scope" value="Archaea"/>
</dbReference>
<dbReference type="HOGENOM" id="CLU_014340_0_0_2"/>
<dbReference type="InParanoid" id="Q97TZ8"/>
<dbReference type="PhylomeDB" id="Q97TZ8"/>
<dbReference type="UniPathway" id="UPA00189">
    <property type="reaction ID" value="UER00296"/>
</dbReference>
<dbReference type="Proteomes" id="UP000001974">
    <property type="component" value="Chromosome"/>
</dbReference>
<dbReference type="GO" id="GO:0005524">
    <property type="term" value="F:ATP binding"/>
    <property type="evidence" value="ECO:0007669"/>
    <property type="project" value="UniProtKB-UniRule"/>
</dbReference>
<dbReference type="GO" id="GO:0003921">
    <property type="term" value="F:GMP synthase activity"/>
    <property type="evidence" value="ECO:0007669"/>
    <property type="project" value="InterPro"/>
</dbReference>
<dbReference type="CDD" id="cd01997">
    <property type="entry name" value="GMP_synthase_C"/>
    <property type="match status" value="1"/>
</dbReference>
<dbReference type="Gene3D" id="3.30.300.10">
    <property type="match status" value="2"/>
</dbReference>
<dbReference type="Gene3D" id="3.40.50.620">
    <property type="entry name" value="HUPs"/>
    <property type="match status" value="1"/>
</dbReference>
<dbReference type="HAMAP" id="MF_00345">
    <property type="entry name" value="GMP_synthase_B"/>
    <property type="match status" value="1"/>
</dbReference>
<dbReference type="InterPro" id="IPR001674">
    <property type="entry name" value="GMP_synth_C"/>
</dbReference>
<dbReference type="InterPro" id="IPR026598">
    <property type="entry name" value="GMP_synthase_B"/>
</dbReference>
<dbReference type="InterPro" id="IPR025777">
    <property type="entry name" value="GMPS_ATP_PPase_dom"/>
</dbReference>
<dbReference type="InterPro" id="IPR022310">
    <property type="entry name" value="NAD/GMP_synthase"/>
</dbReference>
<dbReference type="InterPro" id="IPR014729">
    <property type="entry name" value="Rossmann-like_a/b/a_fold"/>
</dbReference>
<dbReference type="PANTHER" id="PTHR11922:SF2">
    <property type="entry name" value="GMP SYNTHASE [GLUTAMINE-HYDROLYZING]"/>
    <property type="match status" value="1"/>
</dbReference>
<dbReference type="PANTHER" id="PTHR11922">
    <property type="entry name" value="GMP SYNTHASE-RELATED"/>
    <property type="match status" value="1"/>
</dbReference>
<dbReference type="Pfam" id="PF00958">
    <property type="entry name" value="GMP_synt_C"/>
    <property type="match status" value="1"/>
</dbReference>
<dbReference type="Pfam" id="PF02540">
    <property type="entry name" value="NAD_synthase"/>
    <property type="match status" value="1"/>
</dbReference>
<dbReference type="SUPFAM" id="SSF52402">
    <property type="entry name" value="Adenine nucleotide alpha hydrolases-like"/>
    <property type="match status" value="1"/>
</dbReference>
<dbReference type="SUPFAM" id="SSF54810">
    <property type="entry name" value="GMP synthetase C-terminal dimerisation domain"/>
    <property type="match status" value="1"/>
</dbReference>
<dbReference type="PROSITE" id="PS51553">
    <property type="entry name" value="GMPS_ATP_PPASE"/>
    <property type="match status" value="1"/>
</dbReference>
<accession>Q97TZ8</accession>
<feature type="chain" id="PRO_0000140251" description="GMP synthase [glutamine-hydrolyzing] subunit B">
    <location>
        <begin position="1"/>
        <end position="367"/>
    </location>
</feature>
<feature type="domain" description="GMPS ATP-PPase">
    <location>
        <begin position="2"/>
        <end position="190"/>
    </location>
</feature>
<feature type="binding site" evidence="1">
    <location>
        <begin position="29"/>
        <end position="35"/>
    </location>
    <ligand>
        <name>ATP</name>
        <dbReference type="ChEBI" id="CHEBI:30616"/>
    </ligand>
</feature>
<sequence>MFDPASFVEEIGPQLRQKLGNEKVLAAVSGGVDSTTAAVLAYNLLGDKVIPVLVDTGFLRKNEAEKIKDYLSNILPNLIIVDKKETFISEIEGIDDAEMKRKRFRELFYSTISSLMKKFNARYLMQGTIAADWVETQGGIKTQHNVLVQIGIDTEKEWGFTLIEPLADLYKNEVRELARYLKLPKEISERQPFPGPGLLVRAVGKLTREKLEVVREANDIVEKYLDPFNYSQYFAVSFESYGNLVNLDGIDAFLYKARATGVKGDVRAYGNIAKIECSNINNVKNIIDTLVKYDITHVLCTLDERNSGKYSVAIRAVTTEDFMTADYVRIPKEILSKISSEILQKIPNVKEVLYDVTSKPPATIEFE</sequence>